<dbReference type="PIR" id="A60529">
    <property type="entry name" value="A60529"/>
</dbReference>
<dbReference type="GO" id="GO:0005576">
    <property type="term" value="C:extracellular region"/>
    <property type="evidence" value="ECO:0007669"/>
    <property type="project" value="UniProtKB-SubCell"/>
</dbReference>
<dbReference type="GO" id="GO:0005344">
    <property type="term" value="F:oxygen carrier activity"/>
    <property type="evidence" value="ECO:0000314"/>
    <property type="project" value="UniProtKB"/>
</dbReference>
<dbReference type="GO" id="GO:0015671">
    <property type="term" value="P:oxygen transport"/>
    <property type="evidence" value="ECO:0000304"/>
    <property type="project" value="UniProtKB"/>
</dbReference>
<accession>P83174</accession>
<sequence>DSPGGASDTQKQHXVNSXXXKXY</sequence>
<organism evidence="4">
    <name type="scientific">Cancer pagurus</name>
    <name type="common">Rock crab</name>
    <dbReference type="NCBI Taxonomy" id="6755"/>
    <lineage>
        <taxon>Eukaryota</taxon>
        <taxon>Metazoa</taxon>
        <taxon>Ecdysozoa</taxon>
        <taxon>Arthropoda</taxon>
        <taxon>Crustacea</taxon>
        <taxon>Multicrustacea</taxon>
        <taxon>Malacostraca</taxon>
        <taxon>Eumalacostraca</taxon>
        <taxon>Eucarida</taxon>
        <taxon>Decapoda</taxon>
        <taxon>Pleocyemata</taxon>
        <taxon>Brachyura</taxon>
        <taxon>Eubrachyura</taxon>
        <taxon>Cancroidea</taxon>
        <taxon>Cancridae</taxon>
        <taxon>Cancer</taxon>
    </lineage>
</organism>
<comment type="function">
    <text evidence="2">Hemocyanins are copper-containing oxygen carriers occurring freely dissolved in the hemolymph of many mollusks and arthropods.</text>
</comment>
<comment type="subcellular location">
    <subcellularLocation>
        <location>Secreted</location>
        <location>Extracellular space</location>
    </subcellularLocation>
</comment>
<comment type="tissue specificity">
    <text>Hemolymph.</text>
</comment>
<comment type="similarity">
    <text evidence="4">Belongs to the tyrosinase family. Hemocyanin subfamily.</text>
</comment>
<feature type="chain" id="PRO_0000204254" description="Hemocyanin subunit 1">
    <location>
        <begin position="1"/>
        <end position="23" status="greater than"/>
    </location>
</feature>
<feature type="region of interest" description="Disordered" evidence="1">
    <location>
        <begin position="1"/>
        <end position="23"/>
    </location>
</feature>
<feature type="non-terminal residue" evidence="3">
    <location>
        <position position="23"/>
    </location>
</feature>
<proteinExistence type="evidence at protein level"/>
<evidence type="ECO:0000256" key="1">
    <source>
        <dbReference type="SAM" id="MobiDB-lite"/>
    </source>
</evidence>
<evidence type="ECO:0000269" key="2">
    <source>
    </source>
</evidence>
<evidence type="ECO:0000303" key="3">
    <source>
    </source>
</evidence>
<evidence type="ECO:0000305" key="4"/>
<protein>
    <recommendedName>
        <fullName>Hemocyanin subunit 1</fullName>
    </recommendedName>
</protein>
<reference evidence="4" key="1">
    <citation type="journal article" date="1989" name="Comp. Biochem. Physiol.">
        <title>The relationship between N-terminal sequences and immunological characterization of crustacean hemocyanins.</title>
        <authorList>
            <person name="Neuteboom B."/>
            <person name="Sierdsema S.J."/>
            <person name="Beintema J.J."/>
        </authorList>
    </citation>
    <scope>PROTEIN SEQUENCE</scope>
    <source>
        <tissue>Hemolymph</tissue>
    </source>
</reference>
<name>HCY1_CANPG</name>
<keyword id="KW-0186">Copper</keyword>
<keyword id="KW-0903">Direct protein sequencing</keyword>
<keyword id="KW-0561">Oxygen transport</keyword>
<keyword id="KW-0964">Secreted</keyword>
<keyword id="KW-0813">Transport</keyword>